<feature type="signal peptide" evidence="1">
    <location>
        <begin position="1"/>
        <end position="19"/>
    </location>
</feature>
<feature type="chain" id="PRO_5004590959" description="Beta-xylosidase">
    <location>
        <begin position="20"/>
        <end position="592"/>
    </location>
</feature>
<feature type="lipid moiety-binding region" description="N-palmitoyl cysteine" evidence="1">
    <location>
        <position position="20"/>
    </location>
</feature>
<feature type="lipid moiety-binding region" description="S-diacylglycerol cysteine" evidence="1">
    <location>
        <position position="20"/>
    </location>
</feature>
<accession>T2KN85</accession>
<evidence type="ECO:0000255" key="1">
    <source>
        <dbReference type="PROSITE-ProRule" id="PRU00303"/>
    </source>
</evidence>
<evidence type="ECO:0000269" key="2">
    <source>
    </source>
</evidence>
<evidence type="ECO:0000303" key="3">
    <source>
    </source>
</evidence>
<evidence type="ECO:0000305" key="4"/>
<evidence type="ECO:0000305" key="5">
    <source>
    </source>
</evidence>
<dbReference type="EC" id="3.2.1.-" evidence="2"/>
<dbReference type="EMBL" id="HG315671">
    <property type="protein sequence ID" value="CDF79928.1"/>
    <property type="molecule type" value="Genomic_DNA"/>
</dbReference>
<dbReference type="SMR" id="T2KN85"/>
<dbReference type="STRING" id="1347342.BN863_22160"/>
<dbReference type="PATRIC" id="fig|1347342.6.peg.2223"/>
<dbReference type="eggNOG" id="COG3507">
    <property type="taxonomic scope" value="Bacteria"/>
</dbReference>
<dbReference type="HOGENOM" id="CLU_016508_1_0_10"/>
<dbReference type="OrthoDB" id="9801455at2"/>
<dbReference type="Proteomes" id="UP000016160">
    <property type="component" value="Chromosome"/>
</dbReference>
<dbReference type="GO" id="GO:0009279">
    <property type="term" value="C:cell outer membrane"/>
    <property type="evidence" value="ECO:0007669"/>
    <property type="project" value="UniProtKB-SubCell"/>
</dbReference>
<dbReference type="GO" id="GO:0004553">
    <property type="term" value="F:hydrolase activity, hydrolyzing O-glycosyl compounds"/>
    <property type="evidence" value="ECO:0007669"/>
    <property type="project" value="InterPro"/>
</dbReference>
<dbReference type="GO" id="GO:0005975">
    <property type="term" value="P:carbohydrate metabolic process"/>
    <property type="evidence" value="ECO:0007669"/>
    <property type="project" value="InterPro"/>
</dbReference>
<dbReference type="CDD" id="cd09001">
    <property type="entry name" value="GH43_FsAxh1-like"/>
    <property type="match status" value="1"/>
</dbReference>
<dbReference type="Gene3D" id="2.60.120.200">
    <property type="match status" value="1"/>
</dbReference>
<dbReference type="Gene3D" id="2.115.10.20">
    <property type="entry name" value="Glycosyl hydrolase domain, family 43"/>
    <property type="match status" value="1"/>
</dbReference>
<dbReference type="InterPro" id="IPR013320">
    <property type="entry name" value="ConA-like_dom_sf"/>
</dbReference>
<dbReference type="InterPro" id="IPR041542">
    <property type="entry name" value="GH43_C2"/>
</dbReference>
<dbReference type="InterPro" id="IPR006710">
    <property type="entry name" value="Glyco_hydro_43"/>
</dbReference>
<dbReference type="InterPro" id="IPR023296">
    <property type="entry name" value="Glyco_hydro_beta-prop_sf"/>
</dbReference>
<dbReference type="InterPro" id="IPR051795">
    <property type="entry name" value="Glycosyl_Hydrlase_43"/>
</dbReference>
<dbReference type="PANTHER" id="PTHR42812">
    <property type="entry name" value="BETA-XYLOSIDASE"/>
    <property type="match status" value="1"/>
</dbReference>
<dbReference type="PANTHER" id="PTHR42812:SF12">
    <property type="entry name" value="BETA-XYLOSIDASE-RELATED"/>
    <property type="match status" value="1"/>
</dbReference>
<dbReference type="Pfam" id="PF17851">
    <property type="entry name" value="GH43_C2"/>
    <property type="match status" value="1"/>
</dbReference>
<dbReference type="Pfam" id="PF04616">
    <property type="entry name" value="Glyco_hydro_43"/>
    <property type="match status" value="1"/>
</dbReference>
<dbReference type="SUPFAM" id="SSF75005">
    <property type="entry name" value="Arabinanase/levansucrase/invertase"/>
    <property type="match status" value="1"/>
</dbReference>
<dbReference type="SUPFAM" id="SSF49899">
    <property type="entry name" value="Concanavalin A-like lectins/glucanases"/>
    <property type="match status" value="1"/>
</dbReference>
<dbReference type="PROSITE" id="PS51257">
    <property type="entry name" value="PROKAR_LIPOPROTEIN"/>
    <property type="match status" value="1"/>
</dbReference>
<proteinExistence type="evidence at protein level"/>
<gene>
    <name type="ORF">BN863_22160</name>
</gene>
<keyword id="KW-0998">Cell outer membrane</keyword>
<keyword id="KW-0326">Glycosidase</keyword>
<keyword id="KW-0378">Hydrolase</keyword>
<keyword id="KW-0449">Lipoprotein</keyword>
<keyword id="KW-0472">Membrane</keyword>
<keyword id="KW-0564">Palmitate</keyword>
<keyword id="KW-1185">Reference proteome</keyword>
<keyword id="KW-0732">Signal</keyword>
<protein>
    <recommendedName>
        <fullName evidence="3">Beta-xylosidase</fullName>
        <ecNumber evidence="2">3.2.1.-</ecNumber>
    </recommendedName>
    <alternativeName>
        <fullName evidence="4">Glycosyl hydrolase 43 family protein P27</fullName>
        <shortName evidence="3">P27_GH43</shortName>
    </alternativeName>
    <alternativeName>
        <fullName evidence="3">Polysaccharide utilization locus H protein P27</fullName>
        <shortName>PUL H protein P27</shortName>
    </alternativeName>
</protein>
<name>PLH27_FORAG</name>
<comment type="function">
    <text evidence="2 5">Xylosidase involved in ulvan degradation (PubMed:31285597). Ulvan is the main polysaccharide component of the Ulvales (green seaweed) cell wall. It is composed of disaccharide building blocks comprising 3-sulfated rhamnose (Rha3S) linked to D-glucuronic acid (GlcA), L-iduronic acid (IduA), or D-xylose (Xyl) (Probable). Beta-xylosidase converts Xyl-Rha3S, a product of alpha-L-rhamnosidase acting on Rha-Xyl-Rha3S oligosaccharides, further to Xyl and Rha3S (PubMed:31285597).</text>
</comment>
<comment type="subcellular location">
    <subcellularLocation>
        <location evidence="2">Cell outer membrane</location>
        <topology evidence="1">Lipid-anchor</topology>
        <orientation evidence="5">Periplasmic side</orientation>
    </subcellularLocation>
</comment>
<comment type="induction">
    <text evidence="2">By ulvan and rhamnose.</text>
</comment>
<comment type="similarity">
    <text evidence="4">Belongs to the glycosyl hydrolase 43 family.</text>
</comment>
<reference key="1">
    <citation type="journal article" date="2013" name="Appl. Environ. Microbiol.">
        <title>The genome of the alga-associated marine flavobacterium Formosa agariphila KMM 3901T reveals a broad potential for degradation of algal polysaccharides.</title>
        <authorList>
            <person name="Mann A.J."/>
            <person name="Hahnke R.L."/>
            <person name="Huang S."/>
            <person name="Werner J."/>
            <person name="Xing P."/>
            <person name="Barbeyron T."/>
            <person name="Huettel B."/>
            <person name="Stueber K."/>
            <person name="Reinhardt R."/>
            <person name="Harder J."/>
            <person name="Gloeckner F.O."/>
            <person name="Amann R.I."/>
            <person name="Teeling H."/>
        </authorList>
    </citation>
    <scope>NUCLEOTIDE SEQUENCE [LARGE SCALE GENOMIC DNA]</scope>
    <source>
        <strain>DSM 15362 / KCTC 12365 / LMG 23005 / KMM 3901 / M-2Alg 35-1</strain>
    </source>
</reference>
<reference key="2">
    <citation type="journal article" date="2019" name="Nat. Chem. Biol.">
        <title>A marine bacterial enzymatic cascade degrades the algal polysaccharide ulvan.</title>
        <authorList>
            <person name="Reisky L."/>
            <person name="Prechoux A."/>
            <person name="Zuehlke M.K."/>
            <person name="Baeumgen M."/>
            <person name="Robb C.S."/>
            <person name="Gerlach N."/>
            <person name="Roret T."/>
            <person name="Stanetty C."/>
            <person name="Larocque R."/>
            <person name="Michel G."/>
            <person name="Song T."/>
            <person name="Markert S."/>
            <person name="Unfried F."/>
            <person name="Mihovilovic M.D."/>
            <person name="Trautwein-Schult A."/>
            <person name="Becher D."/>
            <person name="Schweder T."/>
            <person name="Bornscheuer U.T."/>
            <person name="Hehemann J.H."/>
        </authorList>
    </citation>
    <scope>FUNCTION</scope>
    <scope>CATALYTIC ACTIVITY</scope>
    <scope>SUBCELLULAR LOCATION</scope>
    <scope>INDUCTION</scope>
</reference>
<organism>
    <name type="scientific">Formosa agariphila (strain DSM 15362 / KCTC 12365 / LMG 23005 / KMM 3901 / M-2Alg 35-1)</name>
    <dbReference type="NCBI Taxonomy" id="1347342"/>
    <lineage>
        <taxon>Bacteria</taxon>
        <taxon>Pseudomonadati</taxon>
        <taxon>Bacteroidota</taxon>
        <taxon>Flavobacteriia</taxon>
        <taxon>Flavobacteriales</taxon>
        <taxon>Flavobacteriaceae</taxon>
        <taxon>Formosa</taxon>
    </lineage>
</organism>
<sequence>MYLNACRALTLISVLSLLACNSEPEKKQATPSKEIAKAQTGSWGDQGDGTYINPILNADYPDSDIEQVGDTYYMITSKQHMSPGMPILESKDMVNWTNVGHVFNSLSWAPEYNWDRMNGYSFGTWAGDLAYHEGTWYCYQIDYQHGLMVATSKDIKGPWSKPIMMLPKSEVLDDPAVFWDEDTHKAYIIINTAGKQKEASNTIEGNENRIYEMSWDGTKILDEGKLVYTGMGAEAAKIYKIDGTWYIFLAQWTMGDMSTKPGVKNPKNDRKQIVLRSKESIYGPYEVKTVLEKGTVFNNRSASQGALMQAPDNSWWYMHQLIQNDDIPFQGRPQCLEPVTWVDGWPIIGVDEDNDGIGEPVKTYKKPIDGYPVTAPRTDDDFSSPKLGFQWEWNHNPRNTHWSLTERPGWLRLKASKVLPNEKGYGPNINEWTNNDGSDSDFWRANNTLSQRIMGITTGTAVAKFDVSGMKPHQLAGFVRYGGVFNLLGVEVDEHGKKHLFYMEPMGEKTVGPEITVNDLYIRTSNRSNQAIYEYSFDGKNFKRFGPTFTIAFGKWTGDRLGLFSWNDKEDAGYIDVDWFTYDYDGPKAANQ</sequence>